<gene>
    <name type="primary">ctdnep1</name>
    <name type="synonym">dullard</name>
    <name type="ORF">TEgg035l07.1</name>
</gene>
<accession>Q28HW9</accession>
<evidence type="ECO:0000250" key="1"/>
<evidence type="ECO:0000255" key="2"/>
<evidence type="ECO:0000255" key="3">
    <source>
        <dbReference type="PROSITE-ProRule" id="PRU00336"/>
    </source>
</evidence>
<evidence type="ECO:0000305" key="4"/>
<comment type="function">
    <text evidence="1">Serine/threonine protein phosphatase that may dephosphorylate and activate lipins. Lipins are phosphatidate phosphatases that catalyze the conversion of phosphatidic acid to diacylglycerol and control the metabolism of fatty acids at different levels. May indirectly modulate the lipid composition of nuclear and/or endoplasmic reticulum membranes and be required for proper nuclear membrane morphology and/or dynamics. May also indirectly regulate the production of lipid droplets and triacylglycerol. Induces neuronal differentiation by antagonizing BMP signaling. Acts both by dephosphorylating BMPR1A and by promoting BMPR2 proteasomal degradation (By similarity).</text>
</comment>
<comment type="catalytic activity">
    <reaction>
        <text>O-phospho-L-seryl-[protein] + H2O = L-seryl-[protein] + phosphate</text>
        <dbReference type="Rhea" id="RHEA:20629"/>
        <dbReference type="Rhea" id="RHEA-COMP:9863"/>
        <dbReference type="Rhea" id="RHEA-COMP:11604"/>
        <dbReference type="ChEBI" id="CHEBI:15377"/>
        <dbReference type="ChEBI" id="CHEBI:29999"/>
        <dbReference type="ChEBI" id="CHEBI:43474"/>
        <dbReference type="ChEBI" id="CHEBI:83421"/>
        <dbReference type="EC" id="3.1.3.16"/>
    </reaction>
</comment>
<comment type="catalytic activity">
    <reaction>
        <text>O-phospho-L-threonyl-[protein] + H2O = L-threonyl-[protein] + phosphate</text>
        <dbReference type="Rhea" id="RHEA:47004"/>
        <dbReference type="Rhea" id="RHEA-COMP:11060"/>
        <dbReference type="Rhea" id="RHEA-COMP:11605"/>
        <dbReference type="ChEBI" id="CHEBI:15377"/>
        <dbReference type="ChEBI" id="CHEBI:30013"/>
        <dbReference type="ChEBI" id="CHEBI:43474"/>
        <dbReference type="ChEBI" id="CHEBI:61977"/>
        <dbReference type="EC" id="3.1.3.16"/>
    </reaction>
</comment>
<comment type="subunit">
    <text evidence="1">Interacts with bmpr1a, bmpr1b and bmpr2.</text>
</comment>
<comment type="subcellular location">
    <subcellularLocation>
        <location evidence="4">Membrane</location>
        <topology evidence="4">Single-pass membrane protein</topology>
    </subcellularLocation>
    <subcellularLocation>
        <location evidence="1">Cytoplasm</location>
        <location evidence="1">Perinuclear region</location>
    </subcellularLocation>
</comment>
<comment type="similarity">
    <text evidence="4">Belongs to the dullard family.</text>
</comment>
<sequence>MMRTPGLLGLRGFVAFAAKLWSFVLYLLRRQVRTIIQYQTVRYDVLPLSPASRNRLSQVKRKVLVLDLDETLIHSHHDGVLRPTVRPGTPPDFILKVVIDKHPVRFFVHKRPHVDFFLEVVSQWYELVVFTASMEIYGSAVADKLDNNRGVLRRRFYRQHCTLELGSYIKDLSVVHSDLSSVVILDNSPGAYRSHPDNAIPIKSWFSDPSDTALLNLLPMLDALRFTADVRSVLSRNLHQHRLW</sequence>
<feature type="chain" id="PRO_0000297973" description="CTD nuclear envelope phosphatase 1">
    <location>
        <begin position="1"/>
        <end position="244"/>
    </location>
</feature>
<feature type="transmembrane region" description="Helical" evidence="2">
    <location>
        <begin position="7"/>
        <end position="29"/>
    </location>
</feature>
<feature type="domain" description="FCP1 homology" evidence="3">
    <location>
        <begin position="57"/>
        <end position="224"/>
    </location>
</feature>
<dbReference type="EC" id="3.1.3.16"/>
<dbReference type="EMBL" id="CR760700">
    <property type="protein sequence ID" value="CAJ82232.1"/>
    <property type="molecule type" value="mRNA"/>
</dbReference>
<dbReference type="RefSeq" id="NP_001017177.1">
    <property type="nucleotide sequence ID" value="NM_001017177.2"/>
</dbReference>
<dbReference type="SMR" id="Q28HW9"/>
<dbReference type="FunCoup" id="Q28HW9">
    <property type="interactions" value="2884"/>
</dbReference>
<dbReference type="STRING" id="8364.ENSXETP00000034464"/>
<dbReference type="PaxDb" id="8364-ENSXETP00000014538"/>
<dbReference type="GeneID" id="549931"/>
<dbReference type="KEGG" id="xtr:549931"/>
<dbReference type="AGR" id="Xenbase:XB-GENE-5939296"/>
<dbReference type="CTD" id="23399"/>
<dbReference type="Xenbase" id="XB-GENE-5939296">
    <property type="gene designation" value="ctdnep1"/>
</dbReference>
<dbReference type="eggNOG" id="KOG1605">
    <property type="taxonomic scope" value="Eukaryota"/>
</dbReference>
<dbReference type="HOGENOM" id="CLU_020262_6_0_1"/>
<dbReference type="InParanoid" id="Q28HW9"/>
<dbReference type="OMA" id="TESMEIY"/>
<dbReference type="OrthoDB" id="277011at2759"/>
<dbReference type="Reactome" id="R-XTR-4419969">
    <property type="pathway name" value="Depolymerization of the Nuclear Lamina"/>
</dbReference>
<dbReference type="Proteomes" id="UP000008143">
    <property type="component" value="Chromosome 3"/>
</dbReference>
<dbReference type="GO" id="GO:0005737">
    <property type="term" value="C:cytoplasm"/>
    <property type="evidence" value="ECO:0000250"/>
    <property type="project" value="UniProtKB"/>
</dbReference>
<dbReference type="GO" id="GO:0005789">
    <property type="term" value="C:endoplasmic reticulum membrane"/>
    <property type="evidence" value="ECO:0000250"/>
    <property type="project" value="UniProtKB"/>
</dbReference>
<dbReference type="GO" id="GO:0071595">
    <property type="term" value="C:Nem1-Spo7 phosphatase complex"/>
    <property type="evidence" value="ECO:0000250"/>
    <property type="project" value="UniProtKB"/>
</dbReference>
<dbReference type="GO" id="GO:0005635">
    <property type="term" value="C:nuclear envelope"/>
    <property type="evidence" value="ECO:0000250"/>
    <property type="project" value="UniProtKB"/>
</dbReference>
<dbReference type="GO" id="GO:0031965">
    <property type="term" value="C:nuclear membrane"/>
    <property type="evidence" value="ECO:0000250"/>
    <property type="project" value="UniProtKB"/>
</dbReference>
<dbReference type="GO" id="GO:0048471">
    <property type="term" value="C:perinuclear region of cytoplasm"/>
    <property type="evidence" value="ECO:0007669"/>
    <property type="project" value="UniProtKB-SubCell"/>
</dbReference>
<dbReference type="GO" id="GO:0004721">
    <property type="term" value="F:phosphoprotein phosphatase activity"/>
    <property type="evidence" value="ECO:0000250"/>
    <property type="project" value="UniProtKB"/>
</dbReference>
<dbReference type="GO" id="GO:0004722">
    <property type="term" value="F:protein serine/threonine phosphatase activity"/>
    <property type="evidence" value="ECO:0000250"/>
    <property type="project" value="UniProtKB"/>
</dbReference>
<dbReference type="GO" id="GO:0030154">
    <property type="term" value="P:cell differentiation"/>
    <property type="evidence" value="ECO:0007669"/>
    <property type="project" value="UniProtKB-KW"/>
</dbReference>
<dbReference type="GO" id="GO:0007399">
    <property type="term" value="P:nervous system development"/>
    <property type="evidence" value="ECO:0007669"/>
    <property type="project" value="UniProtKB-KW"/>
</dbReference>
<dbReference type="GO" id="GO:0006998">
    <property type="term" value="P:nuclear envelope organization"/>
    <property type="evidence" value="ECO:0000250"/>
    <property type="project" value="UniProtKB"/>
</dbReference>
<dbReference type="GO" id="GO:0010867">
    <property type="term" value="P:positive regulation of triglyceride biosynthetic process"/>
    <property type="evidence" value="ECO:0000250"/>
    <property type="project" value="UniProtKB"/>
</dbReference>
<dbReference type="CDD" id="cd07521">
    <property type="entry name" value="HAD_FCP1-like"/>
    <property type="match status" value="1"/>
</dbReference>
<dbReference type="FunFam" id="3.40.50.1000:FF:000044">
    <property type="entry name" value="CTD nuclear envelope phosphatase 1"/>
    <property type="match status" value="1"/>
</dbReference>
<dbReference type="Gene3D" id="3.40.50.1000">
    <property type="entry name" value="HAD superfamily/HAD-like"/>
    <property type="match status" value="1"/>
</dbReference>
<dbReference type="InterPro" id="IPR011948">
    <property type="entry name" value="Dullard_phosphatase"/>
</dbReference>
<dbReference type="InterPro" id="IPR004274">
    <property type="entry name" value="FCP1_dom"/>
</dbReference>
<dbReference type="InterPro" id="IPR036412">
    <property type="entry name" value="HAD-like_sf"/>
</dbReference>
<dbReference type="InterPro" id="IPR023214">
    <property type="entry name" value="HAD_sf"/>
</dbReference>
<dbReference type="InterPro" id="IPR050365">
    <property type="entry name" value="TIM50"/>
</dbReference>
<dbReference type="NCBIfam" id="TIGR02251">
    <property type="entry name" value="HIF-SF_euk"/>
    <property type="match status" value="1"/>
</dbReference>
<dbReference type="PANTHER" id="PTHR12210">
    <property type="entry name" value="DULLARD PROTEIN PHOSPHATASE"/>
    <property type="match status" value="1"/>
</dbReference>
<dbReference type="Pfam" id="PF03031">
    <property type="entry name" value="NIF"/>
    <property type="match status" value="1"/>
</dbReference>
<dbReference type="SMART" id="SM00577">
    <property type="entry name" value="CPDc"/>
    <property type="match status" value="1"/>
</dbReference>
<dbReference type="SUPFAM" id="SSF56784">
    <property type="entry name" value="HAD-like"/>
    <property type="match status" value="1"/>
</dbReference>
<dbReference type="PROSITE" id="PS50969">
    <property type="entry name" value="FCP1"/>
    <property type="match status" value="1"/>
</dbReference>
<keyword id="KW-0963">Cytoplasm</keyword>
<keyword id="KW-0217">Developmental protein</keyword>
<keyword id="KW-0221">Differentiation</keyword>
<keyword id="KW-0378">Hydrolase</keyword>
<keyword id="KW-0472">Membrane</keyword>
<keyword id="KW-0524">Neurogenesis</keyword>
<keyword id="KW-0904">Protein phosphatase</keyword>
<keyword id="KW-1185">Reference proteome</keyword>
<keyword id="KW-0812">Transmembrane</keyword>
<keyword id="KW-1133">Transmembrane helix</keyword>
<name>CNEP1_XENTR</name>
<reference key="1">
    <citation type="submission" date="2006-10" db="EMBL/GenBank/DDBJ databases">
        <authorList>
            <consortium name="Sanger Xenopus tropicalis EST/cDNA project"/>
        </authorList>
    </citation>
    <scope>NUCLEOTIDE SEQUENCE [LARGE SCALE MRNA]</scope>
    <source>
        <tissue>Egg</tissue>
    </source>
</reference>
<organism>
    <name type="scientific">Xenopus tropicalis</name>
    <name type="common">Western clawed frog</name>
    <name type="synonym">Silurana tropicalis</name>
    <dbReference type="NCBI Taxonomy" id="8364"/>
    <lineage>
        <taxon>Eukaryota</taxon>
        <taxon>Metazoa</taxon>
        <taxon>Chordata</taxon>
        <taxon>Craniata</taxon>
        <taxon>Vertebrata</taxon>
        <taxon>Euteleostomi</taxon>
        <taxon>Amphibia</taxon>
        <taxon>Batrachia</taxon>
        <taxon>Anura</taxon>
        <taxon>Pipoidea</taxon>
        <taxon>Pipidae</taxon>
        <taxon>Xenopodinae</taxon>
        <taxon>Xenopus</taxon>
        <taxon>Silurana</taxon>
    </lineage>
</organism>
<protein>
    <recommendedName>
        <fullName>CTD nuclear envelope phosphatase 1</fullName>
        <ecNumber>3.1.3.16</ecNumber>
    </recommendedName>
    <alternativeName>
        <fullName>Serine/threonine-protein phosphatase dullard</fullName>
    </alternativeName>
</protein>
<proteinExistence type="evidence at transcript level"/>